<comment type="function">
    <text evidence="1">Catalyzes the transamination of N(2)-succinylornithine and alpha-ketoglutarate into N(2)-succinylglutamate semialdehyde and glutamate. Can also act as an acetylornithine aminotransferase.</text>
</comment>
<comment type="catalytic activity">
    <reaction evidence="1">
        <text>N(2)-succinyl-L-ornithine + 2-oxoglutarate = N-succinyl-L-glutamate 5-semialdehyde + L-glutamate</text>
        <dbReference type="Rhea" id="RHEA:16953"/>
        <dbReference type="ChEBI" id="CHEBI:16810"/>
        <dbReference type="ChEBI" id="CHEBI:29985"/>
        <dbReference type="ChEBI" id="CHEBI:58514"/>
        <dbReference type="ChEBI" id="CHEBI:58520"/>
        <dbReference type="EC" id="2.6.1.81"/>
    </reaction>
</comment>
<comment type="cofactor">
    <cofactor evidence="1">
        <name>pyridoxal 5'-phosphate</name>
        <dbReference type="ChEBI" id="CHEBI:597326"/>
    </cofactor>
</comment>
<comment type="pathway">
    <text evidence="1">Amino-acid degradation; L-arginine degradation via AST pathway; L-glutamate and succinate from L-arginine: step 3/5.</text>
</comment>
<comment type="induction">
    <text evidence="2">By nitrogen and carbon starvation, and arginine, via the ArgR and Crp transcriptional regulators.</text>
</comment>
<comment type="similarity">
    <text evidence="1">Belongs to the class-III pyridoxal-phosphate-dependent aminotransferase family. AstC subfamily.</text>
</comment>
<feature type="chain" id="PRO_0000120357" description="Succinylornithine transaminase">
    <location>
        <begin position="1"/>
        <end position="408"/>
    </location>
</feature>
<feature type="modified residue" description="N6-(pyridoxal phosphate)lysine" evidence="1">
    <location>
        <position position="252"/>
    </location>
</feature>
<gene>
    <name evidence="1" type="primary">astC</name>
    <name evidence="1" type="synonym">argM</name>
    <name type="ordered locus">STM1303</name>
</gene>
<protein>
    <recommendedName>
        <fullName evidence="1">Succinylornithine transaminase</fullName>
        <shortName>SOAT</shortName>
        <ecNumber evidence="1">2.6.1.81</ecNumber>
    </recommendedName>
    <alternativeName>
        <fullName evidence="1">Succinylornithine aminotransferase</fullName>
    </alternativeName>
</protein>
<accession>Q8ZPV2</accession>
<sequence length="408" mass="43832">MSLSVTRENFDEWMVPVYVPAPFIPVRGEGSRLWDQQGKEYIDFAGGIAVNALGHAHPALREALNEQANRFWHIGNGYTNEPALRLAKKLIDATFAERVFFCNSGAEANEAALKLARKYAHDRVGNHKSGIVAFKNAFHGRTLFTVSAGGQPTYSQDFAPLPPDIRHAAYNDLNSASALIDDNTCAVIVEPVQGEGGVIPATKAFLQGLRELCDRHQALLIFDEVQTGVGRTGELYAYMHYGVTPDILTTAKALGGGFPIGAMLTTQDYASVMTPGTHGTTYGGNPLATAVAGKVLDIINTPEMQNGVRQRHDAFIERLNTLNVRFGMFSEIRGLGLLLGCVLQTEFAGKAKLIAQEAAKAGVMVLIAGGDVVRFAPALNVSDEEIATGLDRFALACERLQTGGVPCG</sequence>
<proteinExistence type="evidence at transcript level"/>
<keyword id="KW-0032">Aminotransferase</keyword>
<keyword id="KW-0056">Arginine metabolism</keyword>
<keyword id="KW-0663">Pyridoxal phosphate</keyword>
<keyword id="KW-1185">Reference proteome</keyword>
<keyword id="KW-0808">Transferase</keyword>
<evidence type="ECO:0000255" key="1">
    <source>
        <dbReference type="HAMAP-Rule" id="MF_01173"/>
    </source>
</evidence>
<evidence type="ECO:0000269" key="2">
    <source>
    </source>
</evidence>
<reference key="1">
    <citation type="journal article" date="2001" name="Nature">
        <title>Complete genome sequence of Salmonella enterica serovar Typhimurium LT2.</title>
        <authorList>
            <person name="McClelland M."/>
            <person name="Sanderson K.E."/>
            <person name="Spieth J."/>
            <person name="Clifton S.W."/>
            <person name="Latreille P."/>
            <person name="Courtney L."/>
            <person name="Porwollik S."/>
            <person name="Ali J."/>
            <person name="Dante M."/>
            <person name="Du F."/>
            <person name="Hou S."/>
            <person name="Layman D."/>
            <person name="Leonard S."/>
            <person name="Nguyen C."/>
            <person name="Scott K."/>
            <person name="Holmes A."/>
            <person name="Grewal N."/>
            <person name="Mulvaney E."/>
            <person name="Ryan E."/>
            <person name="Sun H."/>
            <person name="Florea L."/>
            <person name="Miller W."/>
            <person name="Stoneking T."/>
            <person name="Nhan M."/>
            <person name="Waterston R."/>
            <person name="Wilson R.K."/>
        </authorList>
    </citation>
    <scope>NUCLEOTIDE SEQUENCE [LARGE SCALE GENOMIC DNA]</scope>
    <source>
        <strain>LT2 / SGSC1412 / ATCC 700720</strain>
    </source>
</reference>
<reference key="2">
    <citation type="journal article" date="1999" name="J. Bacteriol.">
        <title>Role of ArgR in activation of the ast operon, encoding enzymes of the arginine succinyltransferase pathway in Salmonella typhimurium.</title>
        <authorList>
            <person name="Lu C.-D."/>
            <person name="Abdelal A.T."/>
        </authorList>
    </citation>
    <scope>INDUCTION</scope>
</reference>
<dbReference type="EC" id="2.6.1.81" evidence="1"/>
<dbReference type="EMBL" id="AE006468">
    <property type="protein sequence ID" value="AAL20228.1"/>
    <property type="molecule type" value="Genomic_DNA"/>
</dbReference>
<dbReference type="RefSeq" id="NP_460269.1">
    <property type="nucleotide sequence ID" value="NC_003197.2"/>
</dbReference>
<dbReference type="RefSeq" id="WP_000059493.1">
    <property type="nucleotide sequence ID" value="NC_003197.2"/>
</dbReference>
<dbReference type="SMR" id="Q8ZPV2"/>
<dbReference type="STRING" id="99287.STM1303"/>
<dbReference type="PaxDb" id="99287-STM1303"/>
<dbReference type="GeneID" id="1252821"/>
<dbReference type="KEGG" id="stm:STM1303"/>
<dbReference type="PATRIC" id="fig|99287.12.peg.1385"/>
<dbReference type="HOGENOM" id="CLU_016922_10_1_6"/>
<dbReference type="OMA" id="RSAWDLC"/>
<dbReference type="PhylomeDB" id="Q8ZPV2"/>
<dbReference type="BioCyc" id="SENT99287:STM1303-MONOMER"/>
<dbReference type="UniPathway" id="UPA00185">
    <property type="reaction ID" value="UER00281"/>
</dbReference>
<dbReference type="Proteomes" id="UP000001014">
    <property type="component" value="Chromosome"/>
</dbReference>
<dbReference type="GO" id="GO:0042802">
    <property type="term" value="F:identical protein binding"/>
    <property type="evidence" value="ECO:0000318"/>
    <property type="project" value="GO_Central"/>
</dbReference>
<dbReference type="GO" id="GO:0030170">
    <property type="term" value="F:pyridoxal phosphate binding"/>
    <property type="evidence" value="ECO:0000318"/>
    <property type="project" value="GO_Central"/>
</dbReference>
<dbReference type="GO" id="GO:0043825">
    <property type="term" value="F:succinylornithine transaminase activity"/>
    <property type="evidence" value="ECO:0007669"/>
    <property type="project" value="UniProtKB-EC"/>
</dbReference>
<dbReference type="GO" id="GO:1901607">
    <property type="term" value="P:alpha-amino acid biosynthetic process"/>
    <property type="evidence" value="ECO:0007669"/>
    <property type="project" value="UniProtKB-ARBA"/>
</dbReference>
<dbReference type="GO" id="GO:0006527">
    <property type="term" value="P:arginine catabolic process"/>
    <property type="evidence" value="ECO:0000318"/>
    <property type="project" value="GO_Central"/>
</dbReference>
<dbReference type="GO" id="GO:0019544">
    <property type="term" value="P:arginine catabolic process to glutamate"/>
    <property type="evidence" value="ECO:0007669"/>
    <property type="project" value="UniProtKB-UniRule"/>
</dbReference>
<dbReference type="GO" id="GO:0019545">
    <property type="term" value="P:arginine catabolic process to succinate"/>
    <property type="evidence" value="ECO:0007669"/>
    <property type="project" value="UniProtKB-UniRule"/>
</dbReference>
<dbReference type="GO" id="GO:0006593">
    <property type="term" value="P:ornithine catabolic process"/>
    <property type="evidence" value="ECO:0007669"/>
    <property type="project" value="InterPro"/>
</dbReference>
<dbReference type="CDD" id="cd00610">
    <property type="entry name" value="OAT_like"/>
    <property type="match status" value="1"/>
</dbReference>
<dbReference type="FunFam" id="3.40.640.10:FF:000004">
    <property type="entry name" value="Acetylornithine aminotransferase"/>
    <property type="match status" value="1"/>
</dbReference>
<dbReference type="Gene3D" id="3.90.1150.10">
    <property type="entry name" value="Aspartate Aminotransferase, domain 1"/>
    <property type="match status" value="1"/>
</dbReference>
<dbReference type="Gene3D" id="3.40.640.10">
    <property type="entry name" value="Type I PLP-dependent aspartate aminotransferase-like (Major domain)"/>
    <property type="match status" value="1"/>
</dbReference>
<dbReference type="HAMAP" id="MF_01107">
    <property type="entry name" value="ArgD_aminotrans_3"/>
    <property type="match status" value="1"/>
</dbReference>
<dbReference type="HAMAP" id="MF_01173">
    <property type="entry name" value="AstC_aminotrans_3"/>
    <property type="match status" value="1"/>
</dbReference>
<dbReference type="InterPro" id="IPR017652">
    <property type="entry name" value="Ac/SucOrn_transaminase_bac"/>
</dbReference>
<dbReference type="InterPro" id="IPR004636">
    <property type="entry name" value="AcOrn/SuccOrn_fam"/>
</dbReference>
<dbReference type="InterPro" id="IPR005814">
    <property type="entry name" value="Aminotrans_3"/>
</dbReference>
<dbReference type="InterPro" id="IPR049704">
    <property type="entry name" value="Aminotrans_3_PPA_site"/>
</dbReference>
<dbReference type="InterPro" id="IPR050103">
    <property type="entry name" value="Class-III_PLP-dep_AT"/>
</dbReference>
<dbReference type="InterPro" id="IPR015424">
    <property type="entry name" value="PyrdxlP-dep_Trfase"/>
</dbReference>
<dbReference type="InterPro" id="IPR015421">
    <property type="entry name" value="PyrdxlP-dep_Trfase_major"/>
</dbReference>
<dbReference type="InterPro" id="IPR015422">
    <property type="entry name" value="PyrdxlP-dep_Trfase_small"/>
</dbReference>
<dbReference type="InterPro" id="IPR001763">
    <property type="entry name" value="Rhodanese-like_dom"/>
</dbReference>
<dbReference type="InterPro" id="IPR026330">
    <property type="entry name" value="SOAT"/>
</dbReference>
<dbReference type="NCBIfam" id="TIGR03246">
    <property type="entry name" value="arg_catab_astC"/>
    <property type="match status" value="1"/>
</dbReference>
<dbReference type="NCBIfam" id="TIGR00707">
    <property type="entry name" value="argD"/>
    <property type="match status" value="1"/>
</dbReference>
<dbReference type="NCBIfam" id="NF002325">
    <property type="entry name" value="PRK01278.1"/>
    <property type="match status" value="1"/>
</dbReference>
<dbReference type="NCBIfam" id="NF003468">
    <property type="entry name" value="PRK05093.1"/>
    <property type="match status" value="1"/>
</dbReference>
<dbReference type="NCBIfam" id="NF009047">
    <property type="entry name" value="PRK12381.1"/>
    <property type="match status" value="1"/>
</dbReference>
<dbReference type="PANTHER" id="PTHR11986">
    <property type="entry name" value="AMINOTRANSFERASE CLASS III"/>
    <property type="match status" value="1"/>
</dbReference>
<dbReference type="PANTHER" id="PTHR11986:SF113">
    <property type="entry name" value="SUCCINYLORNITHINE TRANSAMINASE"/>
    <property type="match status" value="1"/>
</dbReference>
<dbReference type="Pfam" id="PF00202">
    <property type="entry name" value="Aminotran_3"/>
    <property type="match status" value="1"/>
</dbReference>
<dbReference type="PIRSF" id="PIRSF000521">
    <property type="entry name" value="Transaminase_4ab_Lys_Orn"/>
    <property type="match status" value="1"/>
</dbReference>
<dbReference type="SUPFAM" id="SSF53383">
    <property type="entry name" value="PLP-dependent transferases"/>
    <property type="match status" value="1"/>
</dbReference>
<dbReference type="PROSITE" id="PS00600">
    <property type="entry name" value="AA_TRANSFER_CLASS_3"/>
    <property type="match status" value="1"/>
</dbReference>
<name>ASTC_SALTY</name>
<organism>
    <name type="scientific">Salmonella typhimurium (strain LT2 / SGSC1412 / ATCC 700720)</name>
    <dbReference type="NCBI Taxonomy" id="99287"/>
    <lineage>
        <taxon>Bacteria</taxon>
        <taxon>Pseudomonadati</taxon>
        <taxon>Pseudomonadota</taxon>
        <taxon>Gammaproteobacteria</taxon>
        <taxon>Enterobacterales</taxon>
        <taxon>Enterobacteriaceae</taxon>
        <taxon>Salmonella</taxon>
    </lineage>
</organism>